<proteinExistence type="evidence at protein level"/>
<reference key="1">
    <citation type="journal article" date="2004" name="J. Biol. Chem.">
        <title>Structure of the Neisseria meningitidis outer membrane PilQ secretin complex at 12 A resolution.</title>
        <authorList>
            <person name="Collins R.F."/>
            <person name="Frye S.A."/>
            <person name="Kitmitto A."/>
            <person name="Ford R.C."/>
            <person name="Toenjum T."/>
            <person name="Derrick J.P."/>
        </authorList>
    </citation>
    <scope>NUCLEOTIDE SEQUENCE [GENOMIC DNA]</scope>
    <scope>STRUCTURE BY ELECTRON MICROSCOPY (26 ANGSTROMS)</scope>
    <source>
        <strain>CCUG 37602 / M1080 / Serogroup B / Serotype 1</strain>
    </source>
</reference>
<reference key="2">
    <citation type="journal article" date="2000" name="Science">
        <title>Complete genome sequence of Neisseria meningitidis serogroup B strain MC58.</title>
        <authorList>
            <person name="Tettelin H."/>
            <person name="Saunders N.J."/>
            <person name="Heidelberg J.F."/>
            <person name="Jeffries A.C."/>
            <person name="Nelson K.E."/>
            <person name="Eisen J.A."/>
            <person name="Ketchum K.A."/>
            <person name="Hood D.W."/>
            <person name="Peden J.F."/>
            <person name="Dodson R.J."/>
            <person name="Nelson W.C."/>
            <person name="Gwinn M.L."/>
            <person name="DeBoy R.T."/>
            <person name="Peterson J.D."/>
            <person name="Hickey E.K."/>
            <person name="Haft D.H."/>
            <person name="Salzberg S.L."/>
            <person name="White O."/>
            <person name="Fleischmann R.D."/>
            <person name="Dougherty B.A."/>
            <person name="Mason T.M."/>
            <person name="Ciecko A."/>
            <person name="Parksey D.S."/>
            <person name="Blair E."/>
            <person name="Cittone H."/>
            <person name="Clark E.B."/>
            <person name="Cotton M.D."/>
            <person name="Utterback T.R."/>
            <person name="Khouri H.M."/>
            <person name="Qin H."/>
            <person name="Vamathevan J.J."/>
            <person name="Gill J."/>
            <person name="Scarlato V."/>
            <person name="Masignani V."/>
            <person name="Pizza M."/>
            <person name="Grandi G."/>
            <person name="Sun L."/>
            <person name="Smith H.O."/>
            <person name="Fraser C.M."/>
            <person name="Moxon E.R."/>
            <person name="Rappuoli R."/>
            <person name="Venter J.C."/>
        </authorList>
    </citation>
    <scope>NUCLEOTIDE SEQUENCE [LARGE SCALE GENOMIC DNA]</scope>
    <source>
        <strain>ATCC BAA-335 / MC58</strain>
    </source>
</reference>
<reference key="3">
    <citation type="journal article" date="2001" name="J. Bacteriol.">
        <title>Analysis of the PilQ secretin from Neisseria meningitidis by transmission electron microscopy reveals a dodecameric quaternary structure.</title>
        <authorList>
            <person name="Collins R.F."/>
            <person name="Davidsen L."/>
            <person name="Derrick J.P."/>
            <person name="Ford R.C."/>
            <person name="Toenjum T."/>
        </authorList>
    </citation>
    <scope>SUBUNIT</scope>
    <source>
        <strain>CCUG 37602 / M1080 / Serogroup B / Serotype 1</strain>
    </source>
</reference>
<reference key="4">
    <citation type="journal article" date="2005" name="Hum. Vaccin.">
        <title>Characterization of the protein content of a meningococcal outer membrane vesicle vaccine by polyacrylamide gel electrophoresis and mass spectrometry.</title>
        <authorList>
            <person name="Vipond C."/>
            <person name="Wheeler J.X."/>
            <person name="Jones C."/>
            <person name="Feavers I.M."/>
            <person name="Suker J."/>
        </authorList>
    </citation>
    <scope>IDENTIFICATION BY MASS SPECTROMETRY [LARGE SCALE ANALYSIS]</scope>
</reference>
<comment type="function">
    <text evidence="1">Required for type IV pilus biogenesis and competence. Could function as a pore for exit of the pilus but also as a channel for entry of heme and antimicrobial agents and uptake of transforming DNA (By similarity).</text>
</comment>
<comment type="subunit">
    <text evidence="4">Homododecamer. Tetramer of trimer.</text>
</comment>
<comment type="subcellular location">
    <subcellularLocation>
        <location>Cell outer membrane</location>
    </subcellularLocation>
</comment>
<comment type="miscellaneous">
    <text>Present in outer membrane vesicle formulations which are used as vaccines in human.</text>
</comment>
<comment type="similarity">
    <text evidence="5">Belongs to the bacterial secretin family. PilQ subfamily.</text>
</comment>
<dbReference type="EMBL" id="AJ564200">
    <property type="protein sequence ID" value="CAD91899.1"/>
    <property type="molecule type" value="Genomic_DNA"/>
</dbReference>
<dbReference type="EMBL" id="AE002098">
    <property type="protein sequence ID" value="AAY52170.1"/>
    <property type="molecule type" value="Genomic_DNA"/>
</dbReference>
<dbReference type="RefSeq" id="NP_274809.1">
    <property type="nucleotide sequence ID" value="NC_003112.2"/>
</dbReference>
<dbReference type="RefSeq" id="WP_002225652.1">
    <property type="nucleotide sequence ID" value="NC_003112.2"/>
</dbReference>
<dbReference type="PDB" id="4AQZ">
    <property type="method" value="NMR"/>
    <property type="chains" value="A=224-329"/>
</dbReference>
<dbReference type="PDB" id="4AV2">
    <property type="method" value="EM"/>
    <property type="resolution" value="26.00 A"/>
    <property type="chains" value="A/B/C/D/E/F/G/H/I/J/K/L=25-769"/>
</dbReference>
<dbReference type="PDBsum" id="4AQZ"/>
<dbReference type="PDBsum" id="4AV2"/>
<dbReference type="BMRB" id="Q70M91"/>
<dbReference type="EMDB" id="EMD-2105"/>
<dbReference type="SMR" id="Q70M91"/>
<dbReference type="FunCoup" id="Q70M91">
    <property type="interactions" value="73"/>
</dbReference>
<dbReference type="IntAct" id="Q70M91">
    <property type="interactions" value="1"/>
</dbReference>
<dbReference type="STRING" id="122586.NMB1812"/>
<dbReference type="PaxDb" id="122586-NMB1812"/>
<dbReference type="KEGG" id="nme:NMB1812"/>
<dbReference type="PATRIC" id="fig|122586.8.peg.2302"/>
<dbReference type="HOGENOM" id="CLU_006756_0_1_4"/>
<dbReference type="InParanoid" id="Q70M91"/>
<dbReference type="OrthoDB" id="9779724at2"/>
<dbReference type="EvolutionaryTrace" id="Q70M91"/>
<dbReference type="PHI-base" id="PHI:3827"/>
<dbReference type="Proteomes" id="UP000000425">
    <property type="component" value="Chromosome"/>
</dbReference>
<dbReference type="GO" id="GO:0009279">
    <property type="term" value="C:cell outer membrane"/>
    <property type="evidence" value="ECO:0007669"/>
    <property type="project" value="UniProtKB-SubCell"/>
</dbReference>
<dbReference type="GO" id="GO:0030420">
    <property type="term" value="P:establishment of competence for transformation"/>
    <property type="evidence" value="ECO:0007669"/>
    <property type="project" value="UniProtKB-KW"/>
</dbReference>
<dbReference type="GO" id="GO:0009306">
    <property type="term" value="P:protein secretion"/>
    <property type="evidence" value="ECO:0007669"/>
    <property type="project" value="InterPro"/>
</dbReference>
<dbReference type="Gene3D" id="2.60.40.3470">
    <property type="match status" value="1"/>
</dbReference>
<dbReference type="Gene3D" id="2.60.40.3500">
    <property type="match status" value="1"/>
</dbReference>
<dbReference type="Gene3D" id="3.30.1370.120">
    <property type="match status" value="1"/>
</dbReference>
<dbReference type="Gene3D" id="3.30.1370.130">
    <property type="match status" value="1"/>
</dbReference>
<dbReference type="InterPro" id="IPR021731">
    <property type="entry name" value="AMIN_dom"/>
</dbReference>
<dbReference type="InterPro" id="IPR001775">
    <property type="entry name" value="GspD/PilQ"/>
</dbReference>
<dbReference type="InterPro" id="IPR005644">
    <property type="entry name" value="NolW-like"/>
</dbReference>
<dbReference type="InterPro" id="IPR038591">
    <property type="entry name" value="NolW-like_sf"/>
</dbReference>
<dbReference type="InterPro" id="IPR013355">
    <property type="entry name" value="Pilus_4_PilQ"/>
</dbReference>
<dbReference type="InterPro" id="IPR011662">
    <property type="entry name" value="Secretin/TonB_short_N"/>
</dbReference>
<dbReference type="InterPro" id="IPR004846">
    <property type="entry name" value="T2SS/T3SS_dom"/>
</dbReference>
<dbReference type="InterPro" id="IPR004845">
    <property type="entry name" value="T2SS_GspD_CS"/>
</dbReference>
<dbReference type="InterPro" id="IPR051808">
    <property type="entry name" value="Type_IV_pilus_biogenesis"/>
</dbReference>
<dbReference type="NCBIfam" id="TIGR02515">
    <property type="entry name" value="IV_pilus_PilQ"/>
    <property type="match status" value="1"/>
</dbReference>
<dbReference type="PANTHER" id="PTHR30604:SF1">
    <property type="entry name" value="DNA UTILIZATION PROTEIN HOFQ"/>
    <property type="match status" value="1"/>
</dbReference>
<dbReference type="PANTHER" id="PTHR30604">
    <property type="entry name" value="PROTEIN TRANSPORT PROTEIN HOFQ"/>
    <property type="match status" value="1"/>
</dbReference>
<dbReference type="Pfam" id="PF11741">
    <property type="entry name" value="AMIN"/>
    <property type="match status" value="2"/>
</dbReference>
<dbReference type="Pfam" id="PF00263">
    <property type="entry name" value="Secretin"/>
    <property type="match status" value="1"/>
</dbReference>
<dbReference type="Pfam" id="PF03958">
    <property type="entry name" value="Secretin_N"/>
    <property type="match status" value="1"/>
</dbReference>
<dbReference type="Pfam" id="PF07660">
    <property type="entry name" value="STN"/>
    <property type="match status" value="1"/>
</dbReference>
<dbReference type="PRINTS" id="PR00811">
    <property type="entry name" value="BCTERIALGSPD"/>
</dbReference>
<dbReference type="SMART" id="SM00965">
    <property type="entry name" value="STN"/>
    <property type="match status" value="1"/>
</dbReference>
<dbReference type="PROSITE" id="PS00875">
    <property type="entry name" value="T2SP_D"/>
    <property type="match status" value="1"/>
</dbReference>
<protein>
    <recommendedName>
        <fullName>Type IV pilus biogenesis and competence protein PilQ</fullName>
    </recommendedName>
</protein>
<evidence type="ECO:0000250" key="1"/>
<evidence type="ECO:0000255" key="2"/>
<evidence type="ECO:0000256" key="3">
    <source>
        <dbReference type="SAM" id="MobiDB-lite"/>
    </source>
</evidence>
<evidence type="ECO:0000269" key="4">
    <source>
    </source>
</evidence>
<evidence type="ECO:0000305" key="5"/>
<evidence type="ECO:0007829" key="6">
    <source>
        <dbReference type="PDB" id="4AQZ"/>
    </source>
</evidence>
<sequence>MNTKLTKIISGLFVATAAFQTASAGNITDIKVSSLPNKQKIVKVSFDKEIVNPTGFVTSSPARIALDFEQTGISMDQQVLEYADPLLSKISAAQNSSRARLVLNLNKPGQYNTEVRGNKVWIFINESDDTVSAPARPAVKAAPAAPAKQQAAAPSTKSAVSVSEPFTPAKQQAAAPFTESVVSVSAPFSPAKQQAAASAKQQAAAPAKQQAAAPAKQQAAAPAKQTNIDFRKDGKNAGIIELAALGFAGQPDISQQHDHIIVTLKNHTLPTTLQRSLDVADFKTPVQKVTLKRLNNDTQLIITTAGNWELVNKSAAPGYFTFQVLPKKQNLESGGVNNAPKTFTGRKISLDFQDVEIRTILQILAKESGMNIVASDSVNGKMTLSLKDVPWDQALDLVMQARNLDMRQQGNIVNIAPRDELLAKDKALLQAEKDIADLGALYSQNFQLKYKNVEEFRSILRLDNADTTGNRNTLISGRGSVLIDPATNTLIVTDTRSVIEKFRKLIDELDVPAQQVMIEARIVEAADGFSRDLGVKFGATGKKKLKNDTSAFGWGVNSGFGGDDKWGAETKINLPITAAANSISLVRAISSGALNLELSASESLSKTKTLANPRVLTQNRKEAKIESGYEIPFTVTSIANGGSSTNTELKKAVLGLTVTPNITPDGQIIMTVKINKDSPAQCASGNQTILCISTKNLNTQAMVENGGTLIVGGIYEEDNGNTLTKVPLLGDIPVIGNLFKTRGKKTDRRELLIFITPRIMGTAGNSLRY</sequence>
<name>PILQ_NEIMB</name>
<gene>
    <name type="primary">pilQ</name>
    <name type="ordered locus">NMB1812</name>
</gene>
<accession>Q70M91</accession>
<accession>Q4W562</accession>
<keyword id="KW-0002">3D-structure</keyword>
<keyword id="KW-0998">Cell outer membrane</keyword>
<keyword id="KW-0178">Competence</keyword>
<keyword id="KW-0472">Membrane</keyword>
<keyword id="KW-0653">Protein transport</keyword>
<keyword id="KW-1185">Reference proteome</keyword>
<keyword id="KW-0732">Signal</keyword>
<keyword id="KW-0813">Transport</keyword>
<feature type="signal peptide" evidence="2">
    <location>
        <begin position="1"/>
        <end position="24"/>
    </location>
</feature>
<feature type="chain" id="PRO_0000013117" description="Type IV pilus biogenesis and competence protein PilQ">
    <location>
        <begin position="25"/>
        <end position="769"/>
    </location>
</feature>
<feature type="region of interest" description="Disordered" evidence="3">
    <location>
        <begin position="135"/>
        <end position="156"/>
    </location>
</feature>
<feature type="region of interest" description="Disordered" evidence="3">
    <location>
        <begin position="197"/>
        <end position="228"/>
    </location>
</feature>
<feature type="compositionally biased region" description="Low complexity" evidence="3">
    <location>
        <begin position="135"/>
        <end position="154"/>
    </location>
</feature>
<feature type="compositionally biased region" description="Low complexity" evidence="3">
    <location>
        <begin position="197"/>
        <end position="225"/>
    </location>
</feature>
<feature type="sequence variant" description="In strain: CCUG 37602.">
    <original>A</original>
    <variation>T</variation>
    <location>
        <position position="203"/>
    </location>
</feature>
<feature type="sequence variant" description="In strain: CCUG 37602.">
    <location>
        <begin position="218"/>
        <end position="225"/>
    </location>
</feature>
<feature type="sequence variant" description="In strain: CCUG 37602.">
    <original>L</original>
    <variation>F</variation>
    <location>
        <position position="428"/>
    </location>
</feature>
<feature type="sequence variant" description="In strain: CCUG 37602.">
    <original>R</original>
    <variation>A</variation>
    <location>
        <position position="461"/>
    </location>
</feature>
<feature type="sequence variant" description="In strain: CCUG 37602.">
    <original>I</original>
    <variation>V</variation>
    <location>
        <position position="475"/>
    </location>
</feature>
<feature type="sequence variant" description="In strain: CCUG 37602.">
    <original>T</original>
    <variation>P</variation>
    <location>
        <position position="607"/>
    </location>
</feature>
<feature type="strand" evidence="6">
    <location>
        <begin position="227"/>
        <end position="233"/>
    </location>
</feature>
<feature type="turn" evidence="6">
    <location>
        <begin position="234"/>
        <end position="236"/>
    </location>
</feature>
<feature type="strand" evidence="6">
    <location>
        <begin position="237"/>
        <end position="243"/>
    </location>
</feature>
<feature type="strand" evidence="6">
    <location>
        <begin position="252"/>
        <end position="255"/>
    </location>
</feature>
<feature type="strand" evidence="6">
    <location>
        <begin position="257"/>
        <end position="264"/>
    </location>
</feature>
<feature type="turn" evidence="6">
    <location>
        <begin position="271"/>
        <end position="273"/>
    </location>
</feature>
<feature type="strand" evidence="6">
    <location>
        <begin position="282"/>
        <end position="293"/>
    </location>
</feature>
<feature type="strand" evidence="6">
    <location>
        <begin position="295"/>
        <end position="304"/>
    </location>
</feature>
<feature type="strand" evidence="6">
    <location>
        <begin position="306"/>
        <end position="316"/>
    </location>
</feature>
<feature type="strand" evidence="6">
    <location>
        <begin position="319"/>
        <end position="326"/>
    </location>
</feature>
<organism>
    <name type="scientific">Neisseria meningitidis serogroup B (strain ATCC BAA-335 / MC58)</name>
    <dbReference type="NCBI Taxonomy" id="122586"/>
    <lineage>
        <taxon>Bacteria</taxon>
        <taxon>Pseudomonadati</taxon>
        <taxon>Pseudomonadota</taxon>
        <taxon>Betaproteobacteria</taxon>
        <taxon>Neisseriales</taxon>
        <taxon>Neisseriaceae</taxon>
        <taxon>Neisseria</taxon>
    </lineage>
</organism>